<sequence length="273" mass="30290">MRLYRAQALVLRSRSYGEADRLLTLLTRERGKLSAIAKGVRKPTSRLRAGTQPLTHSQLVLYEGKNLQTVTQAEPVESFAALHGDVVRFSHASSMAELVDRLSPDHSGADLFPLLLTGWHLLSVFPGDLVACLFQLRLLDRLGYCPELSLCLDCGEPVEIADSGPWPAYSPEMGGLVGNCCRHRHSEMGLIAPGALALLRHLLQMDPRDLGRLRVGPKLLRHVSAVLKETIRCRSEGNMRSWSVIESVGRSLTEEPELKAEQTEAEKESQRPR</sequence>
<keyword id="KW-0227">DNA damage</keyword>
<keyword id="KW-0233">DNA recombination</keyword>
<keyword id="KW-0234">DNA repair</keyword>
<keyword id="KW-1185">Reference proteome</keyword>
<name>RECO_HELMI</name>
<dbReference type="EMBL" id="CP000930">
    <property type="protein sequence ID" value="ABZ85003.1"/>
    <property type="molecule type" value="Genomic_DNA"/>
</dbReference>
<dbReference type="RefSeq" id="WP_012283500.1">
    <property type="nucleotide sequence ID" value="NC_010337.2"/>
</dbReference>
<dbReference type="SMR" id="B0TAF3"/>
<dbReference type="STRING" id="498761.HM1_2453"/>
<dbReference type="KEGG" id="hmo:HM1_2453"/>
<dbReference type="eggNOG" id="COG1381">
    <property type="taxonomic scope" value="Bacteria"/>
</dbReference>
<dbReference type="HOGENOM" id="CLU_066632_3_0_9"/>
<dbReference type="OrthoDB" id="9797083at2"/>
<dbReference type="Proteomes" id="UP000008550">
    <property type="component" value="Chromosome"/>
</dbReference>
<dbReference type="GO" id="GO:0043590">
    <property type="term" value="C:bacterial nucleoid"/>
    <property type="evidence" value="ECO:0007669"/>
    <property type="project" value="TreeGrafter"/>
</dbReference>
<dbReference type="GO" id="GO:0006310">
    <property type="term" value="P:DNA recombination"/>
    <property type="evidence" value="ECO:0007669"/>
    <property type="project" value="UniProtKB-UniRule"/>
</dbReference>
<dbReference type="GO" id="GO:0006302">
    <property type="term" value="P:double-strand break repair"/>
    <property type="evidence" value="ECO:0007669"/>
    <property type="project" value="TreeGrafter"/>
</dbReference>
<dbReference type="Gene3D" id="2.40.50.140">
    <property type="entry name" value="Nucleic acid-binding proteins"/>
    <property type="match status" value="1"/>
</dbReference>
<dbReference type="Gene3D" id="1.20.1440.120">
    <property type="entry name" value="Recombination protein O, C-terminal domain"/>
    <property type="match status" value="1"/>
</dbReference>
<dbReference type="Gene3D" id="6.20.220.20">
    <property type="entry name" value="Recombination protein O, zinc-binding domain"/>
    <property type="match status" value="1"/>
</dbReference>
<dbReference type="HAMAP" id="MF_00201">
    <property type="entry name" value="RecO"/>
    <property type="match status" value="1"/>
</dbReference>
<dbReference type="InterPro" id="IPR037278">
    <property type="entry name" value="ARFGAP/RecO"/>
</dbReference>
<dbReference type="InterPro" id="IPR022572">
    <property type="entry name" value="DNA_rep/recomb_RecO_N"/>
</dbReference>
<dbReference type="InterPro" id="IPR012340">
    <property type="entry name" value="NA-bd_OB-fold"/>
</dbReference>
<dbReference type="InterPro" id="IPR003717">
    <property type="entry name" value="RecO"/>
</dbReference>
<dbReference type="InterPro" id="IPR042242">
    <property type="entry name" value="RecO_C"/>
</dbReference>
<dbReference type="NCBIfam" id="TIGR00613">
    <property type="entry name" value="reco"/>
    <property type="match status" value="1"/>
</dbReference>
<dbReference type="PANTHER" id="PTHR33991">
    <property type="entry name" value="DNA REPAIR PROTEIN RECO"/>
    <property type="match status" value="1"/>
</dbReference>
<dbReference type="PANTHER" id="PTHR33991:SF1">
    <property type="entry name" value="DNA REPAIR PROTEIN RECO"/>
    <property type="match status" value="1"/>
</dbReference>
<dbReference type="Pfam" id="PF02565">
    <property type="entry name" value="RecO_C"/>
    <property type="match status" value="1"/>
</dbReference>
<dbReference type="Pfam" id="PF11967">
    <property type="entry name" value="RecO_N"/>
    <property type="match status" value="1"/>
</dbReference>
<dbReference type="SUPFAM" id="SSF57863">
    <property type="entry name" value="ArfGap/RecO-like zinc finger"/>
    <property type="match status" value="1"/>
</dbReference>
<dbReference type="SUPFAM" id="SSF50249">
    <property type="entry name" value="Nucleic acid-binding proteins"/>
    <property type="match status" value="1"/>
</dbReference>
<accession>B0TAF3</accession>
<feature type="chain" id="PRO_1000099383" description="DNA repair protein RecO">
    <location>
        <begin position="1"/>
        <end position="273"/>
    </location>
</feature>
<feature type="region of interest" description="Disordered" evidence="2">
    <location>
        <begin position="249"/>
        <end position="273"/>
    </location>
</feature>
<feature type="compositionally biased region" description="Basic and acidic residues" evidence="2">
    <location>
        <begin position="252"/>
        <end position="273"/>
    </location>
</feature>
<evidence type="ECO:0000255" key="1">
    <source>
        <dbReference type="HAMAP-Rule" id="MF_00201"/>
    </source>
</evidence>
<evidence type="ECO:0000256" key="2">
    <source>
        <dbReference type="SAM" id="MobiDB-lite"/>
    </source>
</evidence>
<proteinExistence type="inferred from homology"/>
<reference key="1">
    <citation type="journal article" date="2008" name="J. Bacteriol.">
        <title>The genome of Heliobacterium modesticaldum, a phototrophic representative of the Firmicutes containing the simplest photosynthetic apparatus.</title>
        <authorList>
            <person name="Sattley W.M."/>
            <person name="Madigan M.T."/>
            <person name="Swingley W.D."/>
            <person name="Cheung P.C."/>
            <person name="Clocksin K.M."/>
            <person name="Conrad A.L."/>
            <person name="Dejesa L.C."/>
            <person name="Honchak B.M."/>
            <person name="Jung D.O."/>
            <person name="Karbach L.E."/>
            <person name="Kurdoglu A."/>
            <person name="Lahiri S."/>
            <person name="Mastrian S.D."/>
            <person name="Page L.E."/>
            <person name="Taylor H.L."/>
            <person name="Wang Z.T."/>
            <person name="Raymond J."/>
            <person name="Chen M."/>
            <person name="Blankenship R.E."/>
            <person name="Touchman J.W."/>
        </authorList>
    </citation>
    <scope>NUCLEOTIDE SEQUENCE [LARGE SCALE GENOMIC DNA]</scope>
    <source>
        <strain>ATCC 51547 / Ice1</strain>
    </source>
</reference>
<organism>
    <name type="scientific">Heliobacterium modesticaldum (strain ATCC 51547 / Ice1)</name>
    <dbReference type="NCBI Taxonomy" id="498761"/>
    <lineage>
        <taxon>Bacteria</taxon>
        <taxon>Bacillati</taxon>
        <taxon>Bacillota</taxon>
        <taxon>Clostridia</taxon>
        <taxon>Eubacteriales</taxon>
        <taxon>Heliobacteriaceae</taxon>
        <taxon>Heliomicrobium</taxon>
    </lineage>
</organism>
<comment type="function">
    <text evidence="1">Involved in DNA repair and RecF pathway recombination.</text>
</comment>
<comment type="similarity">
    <text evidence="1">Belongs to the RecO family.</text>
</comment>
<protein>
    <recommendedName>
        <fullName evidence="1">DNA repair protein RecO</fullName>
    </recommendedName>
    <alternativeName>
        <fullName evidence="1">Recombination protein O</fullName>
    </alternativeName>
</protein>
<gene>
    <name evidence="1" type="primary">recO</name>
    <name type="ordered locus">Helmi_23780</name>
    <name type="ORF">HM1_2453</name>
</gene>